<protein>
    <recommendedName>
        <fullName evidence="1">Small ribosomal subunit protein uS4</fullName>
    </recommendedName>
    <alternativeName>
        <fullName evidence="3">30S ribosomal protein S4</fullName>
    </alternativeName>
</protein>
<organism>
    <name type="scientific">Nitrobacter hamburgensis (strain DSM 10229 / NCIMB 13809 / X14)</name>
    <dbReference type="NCBI Taxonomy" id="323097"/>
    <lineage>
        <taxon>Bacteria</taxon>
        <taxon>Pseudomonadati</taxon>
        <taxon>Pseudomonadota</taxon>
        <taxon>Alphaproteobacteria</taxon>
        <taxon>Hyphomicrobiales</taxon>
        <taxon>Nitrobacteraceae</taxon>
        <taxon>Nitrobacter</taxon>
    </lineage>
</organism>
<keyword id="KW-1185">Reference proteome</keyword>
<keyword id="KW-0687">Ribonucleoprotein</keyword>
<keyword id="KW-0689">Ribosomal protein</keyword>
<keyword id="KW-0694">RNA-binding</keyword>
<keyword id="KW-0699">rRNA-binding</keyword>
<name>RS4_NITHX</name>
<accession>Q1QMT5</accession>
<comment type="function">
    <text evidence="1">One of the primary rRNA binding proteins, it binds directly to 16S rRNA where it nucleates assembly of the body of the 30S subunit.</text>
</comment>
<comment type="function">
    <text evidence="1">With S5 and S12 plays an important role in translational accuracy.</text>
</comment>
<comment type="subunit">
    <text evidence="1">Part of the 30S ribosomal subunit. Contacts protein S5. The interaction surface between S4 and S5 is involved in control of translational fidelity.</text>
</comment>
<comment type="similarity">
    <text evidence="1">Belongs to the universal ribosomal protein uS4 family.</text>
</comment>
<evidence type="ECO:0000255" key="1">
    <source>
        <dbReference type="HAMAP-Rule" id="MF_01306"/>
    </source>
</evidence>
<evidence type="ECO:0000256" key="2">
    <source>
        <dbReference type="SAM" id="MobiDB-lite"/>
    </source>
</evidence>
<evidence type="ECO:0000305" key="3"/>
<dbReference type="EMBL" id="CP000319">
    <property type="protein sequence ID" value="ABE62462.1"/>
    <property type="molecule type" value="Genomic_DNA"/>
</dbReference>
<dbReference type="RefSeq" id="WP_011510145.1">
    <property type="nucleotide sequence ID" value="NC_007964.1"/>
</dbReference>
<dbReference type="SMR" id="Q1QMT5"/>
<dbReference type="STRING" id="323097.Nham_1644"/>
<dbReference type="KEGG" id="nha:Nham_1644"/>
<dbReference type="eggNOG" id="COG0522">
    <property type="taxonomic scope" value="Bacteria"/>
</dbReference>
<dbReference type="HOGENOM" id="CLU_092403_0_0_5"/>
<dbReference type="OrthoDB" id="9803672at2"/>
<dbReference type="Proteomes" id="UP000001953">
    <property type="component" value="Chromosome"/>
</dbReference>
<dbReference type="GO" id="GO:0015935">
    <property type="term" value="C:small ribosomal subunit"/>
    <property type="evidence" value="ECO:0007669"/>
    <property type="project" value="InterPro"/>
</dbReference>
<dbReference type="GO" id="GO:0019843">
    <property type="term" value="F:rRNA binding"/>
    <property type="evidence" value="ECO:0007669"/>
    <property type="project" value="UniProtKB-UniRule"/>
</dbReference>
<dbReference type="GO" id="GO:0003735">
    <property type="term" value="F:structural constituent of ribosome"/>
    <property type="evidence" value="ECO:0007669"/>
    <property type="project" value="InterPro"/>
</dbReference>
<dbReference type="GO" id="GO:0042274">
    <property type="term" value="P:ribosomal small subunit biogenesis"/>
    <property type="evidence" value="ECO:0007669"/>
    <property type="project" value="TreeGrafter"/>
</dbReference>
<dbReference type="GO" id="GO:0006412">
    <property type="term" value="P:translation"/>
    <property type="evidence" value="ECO:0007669"/>
    <property type="project" value="UniProtKB-UniRule"/>
</dbReference>
<dbReference type="CDD" id="cd00165">
    <property type="entry name" value="S4"/>
    <property type="match status" value="1"/>
</dbReference>
<dbReference type="FunFam" id="3.10.290.10:FF:000001">
    <property type="entry name" value="30S ribosomal protein S4"/>
    <property type="match status" value="1"/>
</dbReference>
<dbReference type="Gene3D" id="1.10.1050.10">
    <property type="entry name" value="Ribosomal Protein S4 Delta 41, Chain A, domain 1"/>
    <property type="match status" value="1"/>
</dbReference>
<dbReference type="Gene3D" id="3.10.290.10">
    <property type="entry name" value="RNA-binding S4 domain"/>
    <property type="match status" value="1"/>
</dbReference>
<dbReference type="HAMAP" id="MF_01306_B">
    <property type="entry name" value="Ribosomal_uS4_B"/>
    <property type="match status" value="1"/>
</dbReference>
<dbReference type="InterPro" id="IPR022801">
    <property type="entry name" value="Ribosomal_uS4"/>
</dbReference>
<dbReference type="InterPro" id="IPR005709">
    <property type="entry name" value="Ribosomal_uS4_bac-type"/>
</dbReference>
<dbReference type="InterPro" id="IPR018079">
    <property type="entry name" value="Ribosomal_uS4_CS"/>
</dbReference>
<dbReference type="InterPro" id="IPR001912">
    <property type="entry name" value="Ribosomal_uS4_N"/>
</dbReference>
<dbReference type="InterPro" id="IPR002942">
    <property type="entry name" value="S4_RNA-bd"/>
</dbReference>
<dbReference type="InterPro" id="IPR036986">
    <property type="entry name" value="S4_RNA-bd_sf"/>
</dbReference>
<dbReference type="NCBIfam" id="NF003717">
    <property type="entry name" value="PRK05327.1"/>
    <property type="match status" value="1"/>
</dbReference>
<dbReference type="NCBIfam" id="TIGR01017">
    <property type="entry name" value="rpsD_bact"/>
    <property type="match status" value="1"/>
</dbReference>
<dbReference type="PANTHER" id="PTHR11831">
    <property type="entry name" value="30S 40S RIBOSOMAL PROTEIN"/>
    <property type="match status" value="1"/>
</dbReference>
<dbReference type="PANTHER" id="PTHR11831:SF4">
    <property type="entry name" value="SMALL RIBOSOMAL SUBUNIT PROTEIN US4M"/>
    <property type="match status" value="1"/>
</dbReference>
<dbReference type="Pfam" id="PF00163">
    <property type="entry name" value="Ribosomal_S4"/>
    <property type="match status" value="1"/>
</dbReference>
<dbReference type="Pfam" id="PF01479">
    <property type="entry name" value="S4"/>
    <property type="match status" value="1"/>
</dbReference>
<dbReference type="SMART" id="SM01390">
    <property type="entry name" value="Ribosomal_S4"/>
    <property type="match status" value="1"/>
</dbReference>
<dbReference type="SMART" id="SM00363">
    <property type="entry name" value="S4"/>
    <property type="match status" value="1"/>
</dbReference>
<dbReference type="SUPFAM" id="SSF55174">
    <property type="entry name" value="Alpha-L RNA-binding motif"/>
    <property type="match status" value="1"/>
</dbReference>
<dbReference type="PROSITE" id="PS00632">
    <property type="entry name" value="RIBOSOMAL_S4"/>
    <property type="match status" value="1"/>
</dbReference>
<dbReference type="PROSITE" id="PS50889">
    <property type="entry name" value="S4"/>
    <property type="match status" value="1"/>
</dbReference>
<gene>
    <name evidence="1" type="primary">rpsD</name>
    <name type="ordered locus">Nham_1644</name>
</gene>
<feature type="chain" id="PRO_0000293325" description="Small ribosomal subunit protein uS4">
    <location>
        <begin position="1"/>
        <end position="205"/>
    </location>
</feature>
<feature type="domain" description="S4 RNA-binding" evidence="1">
    <location>
        <begin position="94"/>
        <end position="157"/>
    </location>
</feature>
<feature type="region of interest" description="Disordered" evidence="2">
    <location>
        <begin position="18"/>
        <end position="49"/>
    </location>
</feature>
<reference key="1">
    <citation type="submission" date="2006-03" db="EMBL/GenBank/DDBJ databases">
        <title>Complete sequence of chromosome of Nitrobacter hamburgensis X14.</title>
        <authorList>
            <consortium name="US DOE Joint Genome Institute"/>
            <person name="Copeland A."/>
            <person name="Lucas S."/>
            <person name="Lapidus A."/>
            <person name="Barry K."/>
            <person name="Detter J.C."/>
            <person name="Glavina del Rio T."/>
            <person name="Hammon N."/>
            <person name="Israni S."/>
            <person name="Dalin E."/>
            <person name="Tice H."/>
            <person name="Pitluck S."/>
            <person name="Chain P."/>
            <person name="Malfatti S."/>
            <person name="Shin M."/>
            <person name="Vergez L."/>
            <person name="Schmutz J."/>
            <person name="Larimer F."/>
            <person name="Land M."/>
            <person name="Hauser L."/>
            <person name="Kyrpides N."/>
            <person name="Ivanova N."/>
            <person name="Ward B."/>
            <person name="Arp D."/>
            <person name="Klotz M."/>
            <person name="Stein L."/>
            <person name="O'Mullan G."/>
            <person name="Starkenburg S."/>
            <person name="Sayavedra L."/>
            <person name="Poret-Peterson A.T."/>
            <person name="Gentry M.E."/>
            <person name="Bruce D."/>
            <person name="Richardson P."/>
        </authorList>
    </citation>
    <scope>NUCLEOTIDE SEQUENCE [LARGE SCALE GENOMIC DNA]</scope>
    <source>
        <strain>DSM 10229 / NCIMB 13809 / X14</strain>
    </source>
</reference>
<proteinExistence type="inferred from homology"/>
<sequence length="205" mass="23610">MTKRNEAKYKIDRRMGQNIWGRPKSPVNKREYGPGQHGQRRKGKLSDFGTQLRAKQKLKGYYANISERQFYAIYVEATRLKGDSGENLIGLLERRLDTVVYRAKFVPTMFAARQFINHGHVKVNGRRVNIPSYKLKVGDAIEVKDASKQLALVLEANQLAERDVPDFIDADHNKQTAKFVRIPHLADVPFAVQMEPHLIVEFYSR</sequence>